<name>CJE28_CONBU</name>
<protein>
    <recommendedName>
        <fullName evidence="4">Conotoxin Bu28</fullName>
    </recommendedName>
</protein>
<dbReference type="TCDB" id="8.B.38.1.1">
    <property type="family name" value="the conotoxin j (ctx j) family"/>
</dbReference>
<dbReference type="GO" id="GO:0005576">
    <property type="term" value="C:extracellular region"/>
    <property type="evidence" value="ECO:0007669"/>
    <property type="project" value="UniProtKB-SubCell"/>
</dbReference>
<dbReference type="GO" id="GO:0035792">
    <property type="term" value="C:host cell postsynaptic membrane"/>
    <property type="evidence" value="ECO:0007669"/>
    <property type="project" value="UniProtKB-KW"/>
</dbReference>
<dbReference type="GO" id="GO:0030550">
    <property type="term" value="F:acetylcholine receptor inhibitor activity"/>
    <property type="evidence" value="ECO:0007669"/>
    <property type="project" value="UniProtKB-KW"/>
</dbReference>
<dbReference type="GO" id="GO:0015459">
    <property type="term" value="F:potassium channel regulator activity"/>
    <property type="evidence" value="ECO:0007669"/>
    <property type="project" value="UniProtKB-KW"/>
</dbReference>
<dbReference type="GO" id="GO:0090729">
    <property type="term" value="F:toxin activity"/>
    <property type="evidence" value="ECO:0007669"/>
    <property type="project" value="UniProtKB-KW"/>
</dbReference>
<accession>P0CY83</accession>
<reference key="1">
    <citation type="journal article" date="2011" name="BMC Genomics">
        <title>Characterization of the Conus bullatus genome and its venom-duct transcriptome.</title>
        <authorList>
            <person name="Hu H."/>
            <person name="Bandyopadhyay P.K."/>
            <person name="Olivera B.M."/>
            <person name="Yandell M."/>
        </authorList>
    </citation>
    <scope>NUCLEOTIDE SEQUENCE [MRNA]</scope>
    <source>
        <tissue>Venom duct</tissue>
    </source>
</reference>
<sequence length="76" mass="8022">MTSVQSATCCCLLWLVLCVQLVTPDSPATAQLSRHLTARVPVGPALAYACSVMCAKGYDTVVCTCTRRRGVVSSSI</sequence>
<evidence type="ECO:0000250" key="1"/>
<evidence type="ECO:0000250" key="2">
    <source>
        <dbReference type="UniProtKB" id="Q0N4U8"/>
    </source>
</evidence>
<evidence type="ECO:0000255" key="3"/>
<evidence type="ECO:0000303" key="4">
    <source>
    </source>
</evidence>
<evidence type="ECO:0000305" key="5"/>
<evidence type="ECO:0000305" key="6">
    <source>
    </source>
</evidence>
<feature type="signal peptide" evidence="3">
    <location>
        <begin position="1"/>
        <end position="24"/>
    </location>
</feature>
<feature type="propeptide" id="PRO_0000409982" evidence="1">
    <location>
        <begin position="25"/>
        <end position="39"/>
    </location>
</feature>
<feature type="peptide" id="PRO_0000409983" description="Conotoxin Bu28" evidence="5">
    <location>
        <begin position="40"/>
        <end position="69"/>
    </location>
</feature>
<feature type="propeptide" id="PRO_0000409984" evidence="1">
    <location>
        <begin position="71"/>
        <end position="76"/>
    </location>
</feature>
<feature type="modified residue" description="Arginine amide" evidence="2">
    <location>
        <position position="69"/>
    </location>
</feature>
<feature type="disulfide bond" evidence="2">
    <location>
        <begin position="50"/>
        <end position="63"/>
    </location>
</feature>
<feature type="disulfide bond" evidence="2">
    <location>
        <begin position="54"/>
        <end position="65"/>
    </location>
</feature>
<organism>
    <name type="scientific">Conus bullatus</name>
    <name type="common">Bubble cone</name>
    <dbReference type="NCBI Taxonomy" id="89438"/>
    <lineage>
        <taxon>Eukaryota</taxon>
        <taxon>Metazoa</taxon>
        <taxon>Spiralia</taxon>
        <taxon>Lophotrochozoa</taxon>
        <taxon>Mollusca</taxon>
        <taxon>Gastropoda</taxon>
        <taxon>Caenogastropoda</taxon>
        <taxon>Neogastropoda</taxon>
        <taxon>Conoidea</taxon>
        <taxon>Conidae</taxon>
        <taxon>Conus</taxon>
        <taxon>Textilia</taxon>
    </lineage>
</organism>
<comment type="function">
    <text evidence="2">Highly inhibits both nicotinic acetylcholine receptors (neuronal (alpha-3/beta-4) and muscular (alpha-1/beta-1/epsilon/delta) subtypes) and the voltage-gated potassium channel Kv1.6/KCNA6 subtype.</text>
</comment>
<comment type="subcellular location">
    <subcellularLocation>
        <location evidence="6">Secreted</location>
    </subcellularLocation>
</comment>
<comment type="tissue specificity">
    <text evidence="6">Expressed by the venom duct.</text>
</comment>
<comment type="domain">
    <text evidence="5">The cysteine framework is XIV (C-C-C-C).</text>
</comment>
<comment type="similarity">
    <text evidence="5">Belongs to the conotoxin J superfamily.</text>
</comment>
<proteinExistence type="inferred from homology"/>
<keyword id="KW-0008">Acetylcholine receptor inhibiting toxin</keyword>
<keyword id="KW-0027">Amidation</keyword>
<keyword id="KW-1015">Disulfide bond</keyword>
<keyword id="KW-0872">Ion channel impairing toxin</keyword>
<keyword id="KW-0528">Neurotoxin</keyword>
<keyword id="KW-0629">Postsynaptic neurotoxin</keyword>
<keyword id="KW-0632">Potassium channel impairing toxin</keyword>
<keyword id="KW-0964">Secreted</keyword>
<keyword id="KW-0732">Signal</keyword>
<keyword id="KW-0800">Toxin</keyword>
<keyword id="KW-1220">Voltage-gated potassium channel impairing toxin</keyword>